<name>Y1629_METJA</name>
<gene>
    <name type="ordered locus">MJ1629</name>
</gene>
<keyword id="KW-1185">Reference proteome</keyword>
<comment type="similarity">
    <text evidence="1">Belongs to the UPF0282 family.</text>
</comment>
<reference key="1">
    <citation type="journal article" date="1996" name="Science">
        <title>Complete genome sequence of the methanogenic archaeon, Methanococcus jannaschii.</title>
        <authorList>
            <person name="Bult C.J."/>
            <person name="White O."/>
            <person name="Olsen G.J."/>
            <person name="Zhou L."/>
            <person name="Fleischmann R.D."/>
            <person name="Sutton G.G."/>
            <person name="Blake J.A."/>
            <person name="FitzGerald L.M."/>
            <person name="Clayton R.A."/>
            <person name="Gocayne J.D."/>
            <person name="Kerlavage A.R."/>
            <person name="Dougherty B.A."/>
            <person name="Tomb J.-F."/>
            <person name="Adams M.D."/>
            <person name="Reich C.I."/>
            <person name="Overbeek R."/>
            <person name="Kirkness E.F."/>
            <person name="Weinstock K.G."/>
            <person name="Merrick J.M."/>
            <person name="Glodek A."/>
            <person name="Scott J.L."/>
            <person name="Geoghagen N.S.M."/>
            <person name="Weidman J.F."/>
            <person name="Fuhrmann J.L."/>
            <person name="Nguyen D."/>
            <person name="Utterback T.R."/>
            <person name="Kelley J.M."/>
            <person name="Peterson J.D."/>
            <person name="Sadow P.W."/>
            <person name="Hanna M.C."/>
            <person name="Cotton M.D."/>
            <person name="Roberts K.M."/>
            <person name="Hurst M.A."/>
            <person name="Kaine B.P."/>
            <person name="Borodovsky M."/>
            <person name="Klenk H.-P."/>
            <person name="Fraser C.M."/>
            <person name="Smith H.O."/>
            <person name="Woese C.R."/>
            <person name="Venter J.C."/>
        </authorList>
    </citation>
    <scope>NUCLEOTIDE SEQUENCE [LARGE SCALE GENOMIC DNA]</scope>
    <source>
        <strain>ATCC 43067 / DSM 2661 / JAL-1 / JCM 10045 / NBRC 100440</strain>
    </source>
</reference>
<sequence length="292" mass="34049">MKVIPLASESLGVRSLATYVKTKDVGILIDPGVALAPDRYGLKPNDIEFEKLREMRNKINDYAKKSNVITISHYHYDHYTPFFDDIYLESKDYAKELYKDKILLIKHPTEFINKSQMNRAKKFLESVKDIAKKIEFADNKTFKFGKTEIKFSPPFPHGRDDKLGYVLITTVKEGKFKFMHTSDTQGIIFDDIRDYIIKEKPNLILMGGPPTYLMHRYGKKNLEKTNENLKYIVENTGAELIIDHHLLRDKKFREKINVDFKTVAEFLGEKNLLLEAYRKEIKQGKDINELFG</sequence>
<protein>
    <recommendedName>
        <fullName evidence="1">UPF0282 protein MJ1629</fullName>
    </recommendedName>
</protein>
<organism>
    <name type="scientific">Methanocaldococcus jannaschii (strain ATCC 43067 / DSM 2661 / JAL-1 / JCM 10045 / NBRC 100440)</name>
    <name type="common">Methanococcus jannaschii</name>
    <dbReference type="NCBI Taxonomy" id="243232"/>
    <lineage>
        <taxon>Archaea</taxon>
        <taxon>Methanobacteriati</taxon>
        <taxon>Methanobacteriota</taxon>
        <taxon>Methanomada group</taxon>
        <taxon>Methanococci</taxon>
        <taxon>Methanococcales</taxon>
        <taxon>Methanocaldococcaceae</taxon>
        <taxon>Methanocaldococcus</taxon>
    </lineage>
</organism>
<proteinExistence type="inferred from homology"/>
<feature type="chain" id="PRO_0000057631" description="UPF0282 protein MJ1629">
    <location>
        <begin position="1"/>
        <end position="292"/>
    </location>
</feature>
<accession>Q59023</accession>
<dbReference type="EMBL" id="L77117">
    <property type="protein sequence ID" value="AAB99650.1"/>
    <property type="molecule type" value="Genomic_DNA"/>
</dbReference>
<dbReference type="PIR" id="C64503">
    <property type="entry name" value="C64503"/>
</dbReference>
<dbReference type="RefSeq" id="WP_010871153.1">
    <property type="nucleotide sequence ID" value="NC_000909.1"/>
</dbReference>
<dbReference type="STRING" id="243232.MJ_1629"/>
<dbReference type="PaxDb" id="243232-MJ_1629"/>
<dbReference type="EnsemblBacteria" id="AAB99650">
    <property type="protein sequence ID" value="AAB99650"/>
    <property type="gene ID" value="MJ_1629"/>
</dbReference>
<dbReference type="GeneID" id="1452538"/>
<dbReference type="KEGG" id="mja:MJ_1629"/>
<dbReference type="eggNOG" id="arCOG00969">
    <property type="taxonomic scope" value="Archaea"/>
</dbReference>
<dbReference type="HOGENOM" id="CLU_079268_0_0_2"/>
<dbReference type="InParanoid" id="Q59023"/>
<dbReference type="OrthoDB" id="21331at2157"/>
<dbReference type="PhylomeDB" id="Q59023"/>
<dbReference type="Proteomes" id="UP000000805">
    <property type="component" value="Chromosome"/>
</dbReference>
<dbReference type="GO" id="GO:0016787">
    <property type="term" value="F:hydrolase activity"/>
    <property type="evidence" value="ECO:0000318"/>
    <property type="project" value="GO_Central"/>
</dbReference>
<dbReference type="Gene3D" id="3.60.15.10">
    <property type="entry name" value="Ribonuclease Z/Hydroxyacylglutathione hydrolase-like"/>
    <property type="match status" value="1"/>
</dbReference>
<dbReference type="HAMAP" id="MF_01406">
    <property type="entry name" value="UPF0282"/>
    <property type="match status" value="1"/>
</dbReference>
<dbReference type="InterPro" id="IPR036866">
    <property type="entry name" value="RibonucZ/Hydroxyglut_hydro"/>
</dbReference>
<dbReference type="InterPro" id="IPR050114">
    <property type="entry name" value="UPF0173_UPF0282_UlaG_hydrolase"/>
</dbReference>
<dbReference type="InterPro" id="IPR014426">
    <property type="entry name" value="UPF0282_hydrls"/>
</dbReference>
<dbReference type="NCBIfam" id="NF003289">
    <property type="entry name" value="PRK04286.1-3"/>
    <property type="match status" value="1"/>
</dbReference>
<dbReference type="PANTHER" id="PTHR43546">
    <property type="entry name" value="UPF0173 METAL-DEPENDENT HYDROLASE MJ1163-RELATED"/>
    <property type="match status" value="1"/>
</dbReference>
<dbReference type="PANTHER" id="PTHR43546:SF4">
    <property type="entry name" value="UPF0282 PROTEIN MJ1629"/>
    <property type="match status" value="1"/>
</dbReference>
<dbReference type="PIRSF" id="PIRSF004944">
    <property type="entry name" value="UCP004944_hydrls"/>
    <property type="match status" value="1"/>
</dbReference>
<dbReference type="SUPFAM" id="SSF56281">
    <property type="entry name" value="Metallo-hydrolase/oxidoreductase"/>
    <property type="match status" value="1"/>
</dbReference>
<evidence type="ECO:0000255" key="1">
    <source>
        <dbReference type="HAMAP-Rule" id="MF_01406"/>
    </source>
</evidence>